<reference key="1">
    <citation type="journal article" date="2005" name="Infect. Immun.">
        <title>Whole-genome analyses of speciation events in pathogenic Brucellae.</title>
        <authorList>
            <person name="Chain P.S."/>
            <person name="Comerci D.J."/>
            <person name="Tolmasky M.E."/>
            <person name="Larimer F.W."/>
            <person name="Malfatti S.A."/>
            <person name="Vergez L.M."/>
            <person name="Aguero F."/>
            <person name="Land M.L."/>
            <person name="Ugalde R.A."/>
            <person name="Garcia E."/>
        </authorList>
    </citation>
    <scope>NUCLEOTIDE SEQUENCE [LARGE SCALE GENOMIC DNA]</scope>
    <source>
        <strain>2308</strain>
    </source>
</reference>
<protein>
    <recommendedName>
        <fullName evidence="1">Phosphoribosyl-AMP cyclohydrolase</fullName>
        <shortName evidence="1">PRA-CH</shortName>
        <ecNumber evidence="1">3.5.4.19</ecNumber>
    </recommendedName>
</protein>
<keyword id="KW-0028">Amino-acid biosynthesis</keyword>
<keyword id="KW-0963">Cytoplasm</keyword>
<keyword id="KW-0368">Histidine biosynthesis</keyword>
<keyword id="KW-0378">Hydrolase</keyword>
<keyword id="KW-0460">Magnesium</keyword>
<keyword id="KW-0479">Metal-binding</keyword>
<keyword id="KW-1185">Reference proteome</keyword>
<keyword id="KW-0862">Zinc</keyword>
<gene>
    <name evidence="1" type="primary">hisI</name>
    <name type="ordered locus">BAB1_1098</name>
</gene>
<evidence type="ECO:0000255" key="1">
    <source>
        <dbReference type="HAMAP-Rule" id="MF_01021"/>
    </source>
</evidence>
<name>HIS3_BRUA2</name>
<organism>
    <name type="scientific">Brucella abortus (strain 2308)</name>
    <dbReference type="NCBI Taxonomy" id="359391"/>
    <lineage>
        <taxon>Bacteria</taxon>
        <taxon>Pseudomonadati</taxon>
        <taxon>Pseudomonadota</taxon>
        <taxon>Alphaproteobacteria</taxon>
        <taxon>Hyphomicrobiales</taxon>
        <taxon>Brucellaceae</taxon>
        <taxon>Brucella/Ochrobactrum group</taxon>
        <taxon>Brucella</taxon>
    </lineage>
</organism>
<dbReference type="EC" id="3.5.4.19" evidence="1"/>
<dbReference type="EMBL" id="AM040264">
    <property type="protein sequence ID" value="CAJ11054.1"/>
    <property type="molecule type" value="Genomic_DNA"/>
</dbReference>
<dbReference type="SMR" id="Q2YQ02"/>
<dbReference type="STRING" id="359391.BAB1_1098"/>
<dbReference type="KEGG" id="bmf:BAB1_1098"/>
<dbReference type="HOGENOM" id="CLU_048577_5_0_5"/>
<dbReference type="UniPathway" id="UPA00031">
    <property type="reaction ID" value="UER00008"/>
</dbReference>
<dbReference type="Proteomes" id="UP000002719">
    <property type="component" value="Chromosome I"/>
</dbReference>
<dbReference type="GO" id="GO:0005737">
    <property type="term" value="C:cytoplasm"/>
    <property type="evidence" value="ECO:0007669"/>
    <property type="project" value="UniProtKB-SubCell"/>
</dbReference>
<dbReference type="GO" id="GO:0000287">
    <property type="term" value="F:magnesium ion binding"/>
    <property type="evidence" value="ECO:0007669"/>
    <property type="project" value="UniProtKB-UniRule"/>
</dbReference>
<dbReference type="GO" id="GO:0004635">
    <property type="term" value="F:phosphoribosyl-AMP cyclohydrolase activity"/>
    <property type="evidence" value="ECO:0007669"/>
    <property type="project" value="UniProtKB-UniRule"/>
</dbReference>
<dbReference type="GO" id="GO:0008270">
    <property type="term" value="F:zinc ion binding"/>
    <property type="evidence" value="ECO:0007669"/>
    <property type="project" value="UniProtKB-UniRule"/>
</dbReference>
<dbReference type="GO" id="GO:0000105">
    <property type="term" value="P:L-histidine biosynthetic process"/>
    <property type="evidence" value="ECO:0007669"/>
    <property type="project" value="UniProtKB-UniRule"/>
</dbReference>
<dbReference type="FunFam" id="3.10.20.810:FF:000001">
    <property type="entry name" value="Histidine biosynthesis bifunctional protein HisIE"/>
    <property type="match status" value="1"/>
</dbReference>
<dbReference type="Gene3D" id="4.10.80.70">
    <property type="match status" value="1"/>
</dbReference>
<dbReference type="Gene3D" id="3.10.20.810">
    <property type="entry name" value="Phosphoribosyl-AMP cyclohydrolase"/>
    <property type="match status" value="1"/>
</dbReference>
<dbReference type="HAMAP" id="MF_01021">
    <property type="entry name" value="HisI"/>
    <property type="match status" value="1"/>
</dbReference>
<dbReference type="InterPro" id="IPR026660">
    <property type="entry name" value="PRA-CH"/>
</dbReference>
<dbReference type="InterPro" id="IPR002496">
    <property type="entry name" value="PRib_AMP_CycHydrolase_dom"/>
</dbReference>
<dbReference type="InterPro" id="IPR038019">
    <property type="entry name" value="PRib_AMP_CycHydrolase_sf"/>
</dbReference>
<dbReference type="NCBIfam" id="NF000768">
    <property type="entry name" value="PRK00051.1"/>
    <property type="match status" value="1"/>
</dbReference>
<dbReference type="PANTHER" id="PTHR42945">
    <property type="entry name" value="HISTIDINE BIOSYNTHESIS BIFUNCTIONAL PROTEIN"/>
    <property type="match status" value="1"/>
</dbReference>
<dbReference type="PANTHER" id="PTHR42945:SF1">
    <property type="entry name" value="HISTIDINE BIOSYNTHESIS BIFUNCTIONAL PROTEIN HIS7"/>
    <property type="match status" value="1"/>
</dbReference>
<dbReference type="Pfam" id="PF01502">
    <property type="entry name" value="PRA-CH"/>
    <property type="match status" value="1"/>
</dbReference>
<dbReference type="SUPFAM" id="SSF141734">
    <property type="entry name" value="HisI-like"/>
    <property type="match status" value="1"/>
</dbReference>
<accession>Q2YQ02</accession>
<feature type="chain" id="PRO_0000229812" description="Phosphoribosyl-AMP cyclohydrolase">
    <location>
        <begin position="1"/>
        <end position="119"/>
    </location>
</feature>
<feature type="binding site" evidence="1">
    <location>
        <position position="71"/>
    </location>
    <ligand>
        <name>Mg(2+)</name>
        <dbReference type="ChEBI" id="CHEBI:18420"/>
    </ligand>
</feature>
<feature type="binding site" evidence="1">
    <location>
        <position position="72"/>
    </location>
    <ligand>
        <name>Zn(2+)</name>
        <dbReference type="ChEBI" id="CHEBI:29105"/>
        <note>ligand shared between dimeric partners</note>
    </ligand>
</feature>
<feature type="binding site" evidence="1">
    <location>
        <position position="73"/>
    </location>
    <ligand>
        <name>Mg(2+)</name>
        <dbReference type="ChEBI" id="CHEBI:18420"/>
    </ligand>
</feature>
<feature type="binding site" evidence="1">
    <location>
        <position position="75"/>
    </location>
    <ligand>
        <name>Mg(2+)</name>
        <dbReference type="ChEBI" id="CHEBI:18420"/>
    </ligand>
</feature>
<feature type="binding site" evidence="1">
    <location>
        <position position="90"/>
    </location>
    <ligand>
        <name>Zn(2+)</name>
        <dbReference type="ChEBI" id="CHEBI:29105"/>
        <note>ligand shared between dimeric partners</note>
    </ligand>
</feature>
<feature type="binding site" evidence="1">
    <location>
        <position position="97"/>
    </location>
    <ligand>
        <name>Zn(2+)</name>
        <dbReference type="ChEBI" id="CHEBI:29105"/>
        <note>ligand shared between dimeric partners</note>
    </ligand>
</feature>
<sequence>MPRFDASGLITAIVTDARDGELLMVAHMNEEALRLTLETGIAHYWSRSRKTLWKKGETSGNLQSVVELRTDCDQDALWLKVHVAGDGPTCHTGRRSCFYRQVVSSGGKVALTMASDHDQ</sequence>
<proteinExistence type="inferred from homology"/>
<comment type="function">
    <text evidence="1">Catalyzes the hydrolysis of the adenine ring of phosphoribosyl-AMP.</text>
</comment>
<comment type="catalytic activity">
    <reaction evidence="1">
        <text>1-(5-phospho-beta-D-ribosyl)-5'-AMP + H2O = 1-(5-phospho-beta-D-ribosyl)-5-[(5-phospho-beta-D-ribosylamino)methylideneamino]imidazole-4-carboxamide</text>
        <dbReference type="Rhea" id="RHEA:20049"/>
        <dbReference type="ChEBI" id="CHEBI:15377"/>
        <dbReference type="ChEBI" id="CHEBI:58435"/>
        <dbReference type="ChEBI" id="CHEBI:59457"/>
        <dbReference type="EC" id="3.5.4.19"/>
    </reaction>
</comment>
<comment type="cofactor">
    <cofactor evidence="1">
        <name>Mg(2+)</name>
        <dbReference type="ChEBI" id="CHEBI:18420"/>
    </cofactor>
    <text evidence="1">Binds 1 Mg(2+) ion per subunit.</text>
</comment>
<comment type="cofactor">
    <cofactor evidence="1">
        <name>Zn(2+)</name>
        <dbReference type="ChEBI" id="CHEBI:29105"/>
    </cofactor>
    <text evidence="1">Binds 1 zinc ion per subunit.</text>
</comment>
<comment type="pathway">
    <text evidence="1">Amino-acid biosynthesis; L-histidine biosynthesis; L-histidine from 5-phospho-alpha-D-ribose 1-diphosphate: step 3/9.</text>
</comment>
<comment type="subunit">
    <text evidence="1">Homodimer.</text>
</comment>
<comment type="subcellular location">
    <subcellularLocation>
        <location evidence="1">Cytoplasm</location>
    </subcellularLocation>
</comment>
<comment type="similarity">
    <text evidence="1">Belongs to the PRA-CH family.</text>
</comment>